<comment type="function">
    <text evidence="1 2 5 6">Microtubule inner protein (MIP) part of the dynein-decorated doublet microtubules (DMTs) in cilia axoneme, which is required for motile cilia beating (By similarity). Regulates motility patterns of both 9+0 and 9+2 motile cilia through differential localization and recruitment of axonemal dynein components (By similarity). Required for motile cilium formation and movement (PubMed:26538025). Involved in the establishment of left-right symmetry during embryogenesis (PubMed:28621423).</text>
</comment>
<comment type="subcellular location">
    <subcellularLocation>
        <location evidence="1">Cytoplasm</location>
        <location evidence="1">Cytoskeleton</location>
        <location evidence="1">Cilium axoneme</location>
    </subcellularLocation>
    <subcellularLocation>
        <location evidence="5">Cytoplasm</location>
        <location evidence="5">Cytoskeleton</location>
        <location evidence="5">Microtubule organizing center</location>
        <location evidence="5">Centrosome</location>
        <location evidence="5">Centriolar satellite</location>
    </subcellularLocation>
</comment>
<comment type="developmental stage">
    <text evidence="6">In the embryo, expression begins at the gastrula stage, increases during neurulation and continues to accumulate through organogenesis (PubMed:28621423). At late gastrulation, expressed in the dorsal lip of the blastopore, the superficial mesoderm that will give rise to the gastrocoel roof plate (GRP) (PubMed:28621423). During neurulation, expressed at the GRP (PubMed:28621423). Tailbud embryos show a scattered pattern of expression in epidermal cells which is stereotypical of motile ciliated cells (PubMed:28621423).</text>
</comment>
<comment type="disruption phenotype">
    <text evidence="5 6">Morpholino knockdown in embryos results in a reduced number of cilia on multiciliated epithelial cells, slower cilium growth, defective cilium orientation, and a significant decrease in the ability of embryos to generate directed fluid flow over their surface (PubMed:26538025). Morpholino knockdown in embryos results in defective left-right symmetry with impaired localization of coco in early embryogenesis and of pitx2 in late organogenesis (PubMed:28621423).</text>
</comment>
<comment type="similarity">
    <text evidence="9">Belongs to the CFAP53 family.</text>
</comment>
<keyword id="KW-0966">Cell projection</keyword>
<keyword id="KW-0969">Cilium</keyword>
<keyword id="KW-0970">Cilium biogenesis/degradation</keyword>
<keyword id="KW-0175">Coiled coil</keyword>
<keyword id="KW-0963">Cytoplasm</keyword>
<keyword id="KW-0206">Cytoskeleton</keyword>
<keyword id="KW-1185">Reference proteome</keyword>
<name>CFA53_XENLA</name>
<gene>
    <name evidence="12" type="primary">cfap53.L</name>
    <name evidence="7" type="synonym">ccdc11</name>
    <name evidence="10" type="ORF">XELAEV_18008455mg</name>
</gene>
<evidence type="ECO:0000250" key="1">
    <source>
        <dbReference type="UniProtKB" id="Q96M91"/>
    </source>
</evidence>
<evidence type="ECO:0000250" key="2">
    <source>
        <dbReference type="UniProtKB" id="Q9D439"/>
    </source>
</evidence>
<evidence type="ECO:0000255" key="3"/>
<evidence type="ECO:0000256" key="4">
    <source>
        <dbReference type="SAM" id="MobiDB-lite"/>
    </source>
</evidence>
<evidence type="ECO:0000269" key="5">
    <source>
    </source>
</evidence>
<evidence type="ECO:0000269" key="6">
    <source>
    </source>
</evidence>
<evidence type="ECO:0000303" key="7">
    <source>
    </source>
</evidence>
<evidence type="ECO:0000303" key="8">
    <source>
    </source>
</evidence>
<evidence type="ECO:0000305" key="9"/>
<evidence type="ECO:0000312" key="10">
    <source>
        <dbReference type="EMBL" id="OCU02689.1"/>
    </source>
</evidence>
<evidence type="ECO:0000312" key="11">
    <source>
        <dbReference type="Proteomes" id="UP000694892"/>
    </source>
</evidence>
<evidence type="ECO:0000312" key="12">
    <source>
        <dbReference type="Xenbase" id="XB-GENE-6487461"/>
    </source>
</evidence>
<protein>
    <recommendedName>
        <fullName evidence="1">Cilia- and flagella-associated protein 53</fullName>
    </recommendedName>
    <alternativeName>
        <fullName evidence="1">Coiled-coil domain-containing protein 11</fullName>
        <shortName evidence="8">xCcdc11</shortName>
    </alternativeName>
</protein>
<accession>A0A974E306</accession>
<accession>A0A1L8I2S4</accession>
<proteinExistence type="evidence at transcript level"/>
<reference evidence="11" key="1">
    <citation type="journal article" date="2016" name="Nature">
        <title>Genome evolution in the allotetraploid frog Xenopus laevis.</title>
        <authorList>
            <person name="Session A.M."/>
            <person name="Uno Y."/>
            <person name="Kwon T."/>
            <person name="Chapman J.A."/>
            <person name="Toyoda A."/>
            <person name="Takahashi S."/>
            <person name="Fukui A."/>
            <person name="Hikosaka A."/>
            <person name="Suzuki A."/>
            <person name="Kondo M."/>
            <person name="van Heeringen S.J."/>
            <person name="Quigley I."/>
            <person name="Heinz S."/>
            <person name="Ogino H."/>
            <person name="Ochi H."/>
            <person name="Hellsten U."/>
            <person name="Lyons J.B."/>
            <person name="Simakov O."/>
            <person name="Putnam N."/>
            <person name="Stites J."/>
            <person name="Kuroki Y."/>
            <person name="Tanaka T."/>
            <person name="Michiue T."/>
            <person name="Watanabe M."/>
            <person name="Bogdanovic O."/>
            <person name="Lister R."/>
            <person name="Georgiou G."/>
            <person name="Paranjpe S.S."/>
            <person name="van Kruijsbergen I."/>
            <person name="Shu S."/>
            <person name="Carlson J."/>
            <person name="Kinoshita T."/>
            <person name="Ohta Y."/>
            <person name="Mawaribuchi S."/>
            <person name="Jenkins J."/>
            <person name="Grimwood J."/>
            <person name="Schmutz J."/>
            <person name="Mitros T."/>
            <person name="Mozaffari S.V."/>
            <person name="Suzuki Y."/>
            <person name="Haramoto Y."/>
            <person name="Yamamoto T.S."/>
            <person name="Takagi C."/>
            <person name="Heald R."/>
            <person name="Miller K."/>
            <person name="Haudenschild C."/>
            <person name="Kitzman J."/>
            <person name="Nakayama T."/>
            <person name="Izutsu Y."/>
            <person name="Robert J."/>
            <person name="Fortriede J."/>
            <person name="Burns K."/>
            <person name="Lotay V."/>
            <person name="Karimi K."/>
            <person name="Yasuoka Y."/>
            <person name="Dichmann D.S."/>
            <person name="Flajnik M.F."/>
            <person name="Houston D.W."/>
            <person name="Shendure J."/>
            <person name="DuPasquier L."/>
            <person name="Vize P.D."/>
            <person name="Zorn A.M."/>
            <person name="Ito M."/>
            <person name="Marcotte E.M."/>
            <person name="Wallingford J.B."/>
            <person name="Ito Y."/>
            <person name="Asashima M."/>
            <person name="Ueno N."/>
            <person name="Matsuda Y."/>
            <person name="Veenstra G.J."/>
            <person name="Fujiyama A."/>
            <person name="Harland R.M."/>
            <person name="Taira M."/>
            <person name="Rokhsar D.S."/>
        </authorList>
    </citation>
    <scope>NUCLEOTIDE SEQUENCE [LARGE SCALE GENOMIC DNA]</scope>
    <source>
        <strain evidence="11">J</strain>
    </source>
</reference>
<reference evidence="9" key="2">
    <citation type="journal article" date="2016" name="Mol. Biol. Cell">
        <title>Ccdc11 is a novel centriolar satellite protein essential for ciliogenesis and establishment of left-right asymmetry.</title>
        <authorList>
            <person name="Silva E."/>
            <person name="Betleja E."/>
            <person name="John E."/>
            <person name="Spear P."/>
            <person name="Moresco J.J."/>
            <person name="Zhang S."/>
            <person name="Yates J.R. III"/>
            <person name="Mitchell B.J."/>
            <person name="Mahjoub M.R."/>
        </authorList>
    </citation>
    <scope>FUNCTION</scope>
    <scope>SUBCELLULAR LOCATION</scope>
    <scope>DISRUPTION PHENOTYPE</scope>
</reference>
<reference evidence="9" key="3">
    <citation type="journal article" date="2017" name="Int. J. Dev. Biol.">
        <title>Roles of the cilium-associated gene CCDC11 in left-right patterning and in laterality disorders in humans.</title>
        <authorList>
            <person name="Gur M."/>
            <person name="Cohen E.B."/>
            <person name="Genin O."/>
            <person name="Fainsod A."/>
            <person name="Perles Z."/>
            <person name="Cinnamon Y."/>
        </authorList>
    </citation>
    <scope>FUNCTION</scope>
    <scope>DEVELOPMENTAL STAGE</scope>
    <scope>DISRUPTION PHENOTYPE</scope>
</reference>
<sequence length="516" mass="63070">MLYSQRSRPRHREVTGPQPHSVAVVAKFPSSRPRDFAILERRRHEEAREQILTFTKLNTTERVKNKWARVTDQKLLHNMVQREVYRTMEEYKMHLNERRERLSTLLEREEMAYIKEMEAMEETTLERQAKMRERVKSLREKREKERMDFIAEKRDQQFREQCEELRSLRSQIHLNEVCTERMAQIVLKEELNRQRKEEDTIFDQLWEQDRLAKEEQEEKKRQKRIELNQEIACLQKAASEAQKMQEKRLKEEESKLMAEEQRLIKLEEERNLKEKQQNKLQVKSMLEDSIRLKMKRLAREQQEELALDMKILEHVMQGYQDDTEEKRQRKMELRKEQQLYREYLAQQLEEEKRQEREMDKMIEAELEKSWAKKSEQMRKEKEARKRLMKDVMDTRRVQIQEKLERNAKLQEELAHDKELLESATEEHKQLETDRNARQMKVAQQYQRDLVSQVAYQQSQRQAEREEEQREFEAGLTAEKAYQNKLREILSRPYVGHENIHPLRRGRISSPKDWLPQ</sequence>
<dbReference type="EMBL" id="CM004466">
    <property type="protein sequence ID" value="OCU02689.1"/>
    <property type="molecule type" value="Genomic_DNA"/>
</dbReference>
<dbReference type="RefSeq" id="XP_018122456.1">
    <property type="nucleotide sequence ID" value="XM_018266967.2"/>
</dbReference>
<dbReference type="RefSeq" id="XP_018122464.1">
    <property type="nucleotide sequence ID" value="XM_018266975.2"/>
</dbReference>
<dbReference type="RefSeq" id="XP_018122474.1">
    <property type="nucleotide sequence ID" value="XM_018266985.2"/>
</dbReference>
<dbReference type="RefSeq" id="XP_018122483.1">
    <property type="nucleotide sequence ID" value="XM_018266994.2"/>
</dbReference>
<dbReference type="SMR" id="A0A974E306"/>
<dbReference type="PaxDb" id="8355-A0A1L8I2S4"/>
<dbReference type="GeneID" id="108718643"/>
<dbReference type="KEGG" id="xla:108718643"/>
<dbReference type="AGR" id="Xenbase:XB-GENE-6487461"/>
<dbReference type="CTD" id="108718643"/>
<dbReference type="Xenbase" id="XB-GENE-6487461">
    <property type="gene designation" value="cfap53.L"/>
</dbReference>
<dbReference type="OMA" id="IQAQHND"/>
<dbReference type="OrthoDB" id="75950at2759"/>
<dbReference type="Proteomes" id="UP000186698">
    <property type="component" value="Chromosome 1L"/>
</dbReference>
<dbReference type="Proteomes" id="UP000694892">
    <property type="component" value="Chromosome 1L"/>
</dbReference>
<dbReference type="Bgee" id="108718643">
    <property type="expression patterns" value="Expressed in testis and 14 other cell types or tissues"/>
</dbReference>
<dbReference type="GO" id="GO:0034451">
    <property type="term" value="C:centriolar satellite"/>
    <property type="evidence" value="ECO:0007669"/>
    <property type="project" value="UniProtKB-SubCell"/>
</dbReference>
<dbReference type="GO" id="GO:0005929">
    <property type="term" value="C:cilium"/>
    <property type="evidence" value="ECO:0007669"/>
    <property type="project" value="UniProtKB-KW"/>
</dbReference>
<dbReference type="GO" id="GO:0005737">
    <property type="term" value="C:cytoplasm"/>
    <property type="evidence" value="ECO:0007669"/>
    <property type="project" value="UniProtKB-KW"/>
</dbReference>
<dbReference type="GO" id="GO:0030030">
    <property type="term" value="P:cell projection organization"/>
    <property type="evidence" value="ECO:0007669"/>
    <property type="project" value="UniProtKB-KW"/>
</dbReference>
<dbReference type="GO" id="GO:0003341">
    <property type="term" value="P:cilium movement"/>
    <property type="evidence" value="ECO:0000315"/>
    <property type="project" value="UniProtKB"/>
</dbReference>
<dbReference type="GO" id="GO:0007368">
    <property type="term" value="P:determination of left/right symmetry"/>
    <property type="evidence" value="ECO:0000250"/>
    <property type="project" value="UniProtKB"/>
</dbReference>
<dbReference type="InterPro" id="IPR043596">
    <property type="entry name" value="CFAP53/TCHP"/>
</dbReference>
<dbReference type="InterPro" id="IPR043597">
    <property type="entry name" value="TPH_dom"/>
</dbReference>
<dbReference type="PANTHER" id="PTHR31183:SF1">
    <property type="entry name" value="CILIA- AND FLAGELLA-ASSOCIATED PROTEIN 53"/>
    <property type="match status" value="1"/>
</dbReference>
<dbReference type="PANTHER" id="PTHR31183">
    <property type="entry name" value="TRICHOPLEIN KERATIN FILAMENT-BINDING PROTEIN FAMILY MEMBER"/>
    <property type="match status" value="1"/>
</dbReference>
<dbReference type="Pfam" id="PF13868">
    <property type="entry name" value="TPH"/>
    <property type="match status" value="1"/>
</dbReference>
<feature type="chain" id="PRO_0000460360" description="Cilia- and flagella-associated protein 53">
    <location>
        <begin position="1"/>
        <end position="516"/>
    </location>
</feature>
<feature type="region of interest" description="Disordered" evidence="4">
    <location>
        <begin position="417"/>
        <end position="443"/>
    </location>
</feature>
<feature type="region of interest" description="Disordered" evidence="4">
    <location>
        <begin position="455"/>
        <end position="475"/>
    </location>
</feature>
<feature type="coiled-coil region" evidence="3">
    <location>
        <begin position="217"/>
        <end position="283"/>
    </location>
</feature>
<feature type="coiled-coil region" evidence="3">
    <location>
        <begin position="316"/>
        <end position="440"/>
    </location>
</feature>
<feature type="compositionally biased region" description="Basic and acidic residues" evidence="4">
    <location>
        <begin position="417"/>
        <end position="436"/>
    </location>
</feature>
<feature type="compositionally biased region" description="Basic and acidic residues" evidence="4">
    <location>
        <begin position="461"/>
        <end position="472"/>
    </location>
</feature>
<organism evidence="11">
    <name type="scientific">Xenopus laevis</name>
    <name type="common">African clawed frog</name>
    <dbReference type="NCBI Taxonomy" id="8355"/>
    <lineage>
        <taxon>Eukaryota</taxon>
        <taxon>Metazoa</taxon>
        <taxon>Chordata</taxon>
        <taxon>Craniata</taxon>
        <taxon>Vertebrata</taxon>
        <taxon>Euteleostomi</taxon>
        <taxon>Amphibia</taxon>
        <taxon>Batrachia</taxon>
        <taxon>Anura</taxon>
        <taxon>Pipoidea</taxon>
        <taxon>Pipidae</taxon>
        <taxon>Xenopodinae</taxon>
        <taxon>Xenopus</taxon>
        <taxon>Xenopus</taxon>
    </lineage>
</organism>